<evidence type="ECO:0000250" key="1">
    <source>
        <dbReference type="UniProtKB" id="Q13907"/>
    </source>
</evidence>
<evidence type="ECO:0000255" key="2"/>
<evidence type="ECO:0000255" key="3">
    <source>
        <dbReference type="PROSITE-ProRule" id="PRU00794"/>
    </source>
</evidence>
<evidence type="ECO:0000269" key="4">
    <source>
    </source>
</evidence>
<evidence type="ECO:0000303" key="5">
    <source>
    </source>
</evidence>
<evidence type="ECO:0000305" key="6"/>
<evidence type="ECO:0000312" key="7">
    <source>
        <dbReference type="EMBL" id="KAF4355009.1"/>
    </source>
</evidence>
<evidence type="ECO:0000312" key="8">
    <source>
        <dbReference type="EMBL" id="KAF4360213.1"/>
    </source>
</evidence>
<evidence type="ECO:0000312" key="9">
    <source>
        <dbReference type="EMBL" id="KAF4366084.1"/>
    </source>
</evidence>
<evidence type="ECO:0000312" key="10">
    <source>
        <dbReference type="EMBL" id="KAF4387345.1"/>
    </source>
</evidence>
<evidence type="ECO:0000312" key="11">
    <source>
        <dbReference type="EMBL" id="MBA5282455.1"/>
    </source>
</evidence>
<keyword id="KW-0149">Chlorophyll biosynthesis</keyword>
<keyword id="KW-0150">Chloroplast</keyword>
<keyword id="KW-0413">Isomerase</keyword>
<keyword id="KW-0414">Isoprene biosynthesis</keyword>
<keyword id="KW-0460">Magnesium</keyword>
<keyword id="KW-0479">Metal-binding</keyword>
<keyword id="KW-0934">Plastid</keyword>
<keyword id="KW-1185">Reference proteome</keyword>
<keyword id="KW-0809">Transit peptide</keyword>
<feature type="transit peptide" description="Chloroplast" evidence="2">
    <location>
        <begin position="1"/>
        <end position="51"/>
    </location>
</feature>
<feature type="chain" id="PRO_0000460891" description="Isopentenyl-diphosphate Delta-isomerase 1, chloroplastic">
    <location>
        <begin position="52"/>
        <end position="287"/>
    </location>
</feature>
<feature type="domain" description="Nudix hydrolase" evidence="3">
    <location>
        <begin position="104"/>
        <end position="256"/>
    </location>
</feature>
<feature type="short sequence motif" description="Nudix box" evidence="3">
    <location>
        <begin position="142"/>
        <end position="172"/>
    </location>
</feature>
<feature type="active site" evidence="1">
    <location>
        <position position="141"/>
    </location>
</feature>
<feature type="active site" evidence="1">
    <location>
        <position position="203"/>
    </location>
</feature>
<feature type="binding site" evidence="1">
    <location>
        <position position="90"/>
    </location>
    <ligand>
        <name>substrate</name>
    </ligand>
</feature>
<feature type="binding site" evidence="1">
    <location>
        <position position="94"/>
    </location>
    <ligand>
        <name>Mg(2+)</name>
        <dbReference type="ChEBI" id="CHEBI:18420"/>
    </ligand>
</feature>
<feature type="binding site" evidence="1">
    <location>
        <position position="106"/>
    </location>
    <ligand>
        <name>Mg(2+)</name>
        <dbReference type="ChEBI" id="CHEBI:18420"/>
    </ligand>
</feature>
<feature type="binding site" evidence="1">
    <location>
        <position position="125"/>
    </location>
    <ligand>
        <name>substrate</name>
    </ligand>
</feature>
<feature type="binding site" evidence="1">
    <location>
        <position position="129"/>
    </location>
    <ligand>
        <name>substrate</name>
    </ligand>
</feature>
<feature type="binding site" evidence="1">
    <location>
        <position position="142"/>
    </location>
    <ligand>
        <name>substrate</name>
    </ligand>
</feature>
<feature type="binding site" evidence="1">
    <location>
        <position position="201"/>
    </location>
    <ligand>
        <name>Mg(2+)</name>
        <dbReference type="ChEBI" id="CHEBI:18420"/>
    </ligand>
</feature>
<feature type="binding site" evidence="1">
    <location>
        <position position="203"/>
    </location>
    <ligand>
        <name>Mg(2+)</name>
        <dbReference type="ChEBI" id="CHEBI:18420"/>
    </ligand>
</feature>
<proteinExistence type="evidence at transcript level"/>
<accession>A0A7C9FSB8</accession>
<accession>A0A1V0QSG5</accession>
<organism>
    <name type="scientific">Cannabis sativa</name>
    <name type="common">Hemp</name>
    <name type="synonym">Marijuana</name>
    <dbReference type="NCBI Taxonomy" id="3483"/>
    <lineage>
        <taxon>Eukaryota</taxon>
        <taxon>Viridiplantae</taxon>
        <taxon>Streptophyta</taxon>
        <taxon>Embryophyta</taxon>
        <taxon>Tracheophyta</taxon>
        <taxon>Spermatophyta</taxon>
        <taxon>Magnoliopsida</taxon>
        <taxon>eudicotyledons</taxon>
        <taxon>Gunneridae</taxon>
        <taxon>Pentapetalae</taxon>
        <taxon>rosids</taxon>
        <taxon>fabids</taxon>
        <taxon>Rosales</taxon>
        <taxon>Cannabaceae</taxon>
        <taxon>Cannabis</taxon>
    </lineage>
</organism>
<comment type="function">
    <text evidence="1">Catalyzes the 1,3-allylic rearrangement of the homoallylic substrate isopentenyl (IPP) to its highly electrophilic allylic isomer, dimethylallyl diphosphate (DMAPP).</text>
</comment>
<comment type="catalytic activity">
    <reaction evidence="1">
        <text>isopentenyl diphosphate = dimethylallyl diphosphate</text>
        <dbReference type="Rhea" id="RHEA:23284"/>
        <dbReference type="ChEBI" id="CHEBI:57623"/>
        <dbReference type="ChEBI" id="CHEBI:128769"/>
        <dbReference type="EC" id="5.3.3.2"/>
    </reaction>
    <physiologicalReaction direction="left-to-right" evidence="1">
        <dbReference type="Rhea" id="RHEA:23285"/>
    </physiologicalReaction>
</comment>
<comment type="cofactor">
    <cofactor evidence="1">
        <name>Mg(2+)</name>
        <dbReference type="ChEBI" id="CHEBI:18420"/>
    </cofactor>
    <text evidence="1">Binds 1 Mg(2+) ion per subunit.</text>
</comment>
<comment type="pathway">
    <text evidence="1">Isoprenoid biosynthesis; dimethylallyl diphosphate biosynthesis; dimethylallyl diphosphate from isopentenyl diphosphate: step 1/1.</text>
</comment>
<comment type="pathway">
    <text evidence="6">Porphyrin-containing compound metabolism; chlorophyll biosynthesis.</text>
</comment>
<comment type="subunit">
    <text evidence="1">Monomer.</text>
</comment>
<comment type="subcellular location">
    <subcellularLocation>
        <location evidence="2">Plastid</location>
        <location evidence="2">Chloroplast</location>
    </subcellularLocation>
</comment>
<comment type="tissue specificity">
    <text evidence="4">Mainly expressed in roots and trichomes and, to a lower extent, in leaves, flowers and stems.</text>
</comment>
<comment type="similarity">
    <text evidence="6">Belongs to the IPP isomerase type 1 family.</text>
</comment>
<comment type="sequence caution" evidence="6">
    <conflict type="erroneous initiation">
        <sequence resource="EMBL-CDS" id="ARE72265"/>
    </conflict>
    <text>Extended N-terminus.</text>
</comment>
<gene>
    <name evidence="5" type="primary">IDI</name>
    <name evidence="11" type="synonym">IPP1</name>
    <name evidence="10" type="ORF">F8388_016754</name>
    <name evidence="7" type="ORF">F8388_026510</name>
    <name evidence="9" type="ORF">G4B88_000394</name>
    <name evidence="8" type="ORF">G4B88_005179</name>
</gene>
<reference key="1">
    <citation type="journal article" date="2017" name="PLoS ONE">
        <title>Terpene synthases from Cannabis sativa.</title>
        <authorList>
            <person name="Booth J.K."/>
            <person name="Page J.E."/>
            <person name="Bohlmann J."/>
        </authorList>
    </citation>
    <scope>NUCLEOTIDE SEQUENCE [MRNA]</scope>
    <scope>TISSUE SPECIFICITY</scope>
    <source>
        <strain>cv. Finola</strain>
        <strain>cv. Purple Kush TPS13</strain>
    </source>
</reference>
<reference key="2">
    <citation type="submission" date="2020-03" db="EMBL/GenBank/DDBJ databases">
        <title>Sequence and annotation of 42 cannabis genomes reveals extensive copy number variation in cannabinoid synthesis and pathogen resistance genes.</title>
        <authorList>
            <person name="Mckernan K.J."/>
            <person name="Helbert Y."/>
            <person name="Kane L.T."/>
            <person name="Ebling H."/>
            <person name="Zhang L."/>
            <person name="Liu B."/>
            <person name="Eaton Z."/>
            <person name="Mclaughlin S."/>
            <person name="Kingan S."/>
            <person name="Baybayan P."/>
            <person name="Concepcion G."/>
            <person name="Jordan M."/>
            <person name="Riva A."/>
            <person name="Barbazuk W."/>
            <person name="Harkins T."/>
        </authorList>
    </citation>
    <scope>NUCLEOTIDE SEQUENCE [LARGE SCALE GENOMIC DNA]</scope>
    <source>
        <strain>cv. Jamaican Lion 4</strain>
        <tissue>Leaf</tissue>
    </source>
</reference>
<reference key="3">
    <citation type="submission" date="2019-09" db="EMBL/GenBank/DDBJ databases">
        <title>De novo assembly and annotation of transcriptomes from two cultivars of Cannabis sativa with different cannabinoid profiles.</title>
        <authorList>
            <person name="McGarvey P."/>
        </authorList>
    </citation>
    <scope>NUCLEOTIDE SEQUENCE [LARGE SCALE MRNA]</scope>
    <source>
        <strain>cv. Hetech 2</strain>
        <tissue>Flower bud</tissue>
    </source>
</reference>
<dbReference type="EC" id="5.3.3.2" evidence="1"/>
<dbReference type="EMBL" id="KY014569">
    <property type="protein sequence ID" value="ARE72265.1"/>
    <property type="status" value="ALT_INIT"/>
    <property type="molecule type" value="mRNA"/>
</dbReference>
<dbReference type="EMBL" id="JAATIP010000271">
    <property type="protein sequence ID" value="KAF4355009.1"/>
    <property type="molecule type" value="Genomic_DNA"/>
</dbReference>
<dbReference type="EMBL" id="JAATIQ010000355">
    <property type="protein sequence ID" value="KAF4360213.1"/>
    <property type="molecule type" value="Genomic_DNA"/>
</dbReference>
<dbReference type="EMBL" id="JAATIQ010000265">
    <property type="protein sequence ID" value="KAF4366084.1"/>
    <property type="molecule type" value="Genomic_DNA"/>
</dbReference>
<dbReference type="EMBL" id="JAATIP010000039">
    <property type="protein sequence ID" value="KAF4387345.1"/>
    <property type="molecule type" value="Genomic_DNA"/>
</dbReference>
<dbReference type="EMBL" id="GHVG01000010">
    <property type="protein sequence ID" value="MBA5282455.1"/>
    <property type="molecule type" value="Transcribed_RNA"/>
</dbReference>
<dbReference type="SMR" id="A0A7C9FSB8"/>
<dbReference type="UniPathway" id="UPA00059">
    <property type="reaction ID" value="UER00104"/>
</dbReference>
<dbReference type="UniPathway" id="UPA00668"/>
<dbReference type="Proteomes" id="UP000525078">
    <property type="component" value="Unassembled WGS sequence"/>
</dbReference>
<dbReference type="Proteomes" id="UP000583929">
    <property type="component" value="Unassembled WGS sequence"/>
</dbReference>
<dbReference type="Proteomes" id="UP000596661">
    <property type="component" value="Unplaced"/>
</dbReference>
<dbReference type="GO" id="GO:0009507">
    <property type="term" value="C:chloroplast"/>
    <property type="evidence" value="ECO:0007669"/>
    <property type="project" value="UniProtKB-SubCell"/>
</dbReference>
<dbReference type="GO" id="GO:0004452">
    <property type="term" value="F:isopentenyl-diphosphate delta-isomerase activity"/>
    <property type="evidence" value="ECO:0007669"/>
    <property type="project" value="UniProtKB-EC"/>
</dbReference>
<dbReference type="GO" id="GO:0046872">
    <property type="term" value="F:metal ion binding"/>
    <property type="evidence" value="ECO:0007669"/>
    <property type="project" value="UniProtKB-KW"/>
</dbReference>
<dbReference type="GO" id="GO:0015995">
    <property type="term" value="P:chlorophyll biosynthetic process"/>
    <property type="evidence" value="ECO:0007669"/>
    <property type="project" value="UniProtKB-UniPathway"/>
</dbReference>
<dbReference type="GO" id="GO:0050992">
    <property type="term" value="P:dimethylallyl diphosphate biosynthetic process"/>
    <property type="evidence" value="ECO:0007669"/>
    <property type="project" value="UniProtKB-UniPathway"/>
</dbReference>
<dbReference type="GO" id="GO:0009240">
    <property type="term" value="P:isopentenyl diphosphate biosynthetic process"/>
    <property type="evidence" value="ECO:0007669"/>
    <property type="project" value="TreeGrafter"/>
</dbReference>
<dbReference type="CDD" id="cd02885">
    <property type="entry name" value="NUDIX_IPP_Isomerase"/>
    <property type="match status" value="1"/>
</dbReference>
<dbReference type="FunFam" id="3.90.79.10:FF:000025">
    <property type="entry name" value="isopentenyl-diphosphate Delta-isomerase I"/>
    <property type="match status" value="1"/>
</dbReference>
<dbReference type="Gene3D" id="3.90.79.10">
    <property type="entry name" value="Nucleoside Triphosphate Pyrophosphohydrolase"/>
    <property type="match status" value="1"/>
</dbReference>
<dbReference type="InterPro" id="IPR011876">
    <property type="entry name" value="IsopentenylPP_isomerase_typ1"/>
</dbReference>
<dbReference type="InterPro" id="IPR015797">
    <property type="entry name" value="NUDIX_hydrolase-like_dom_sf"/>
</dbReference>
<dbReference type="InterPro" id="IPR000086">
    <property type="entry name" value="NUDIX_hydrolase_dom"/>
</dbReference>
<dbReference type="NCBIfam" id="TIGR02150">
    <property type="entry name" value="IPP_isom_1"/>
    <property type="match status" value="1"/>
</dbReference>
<dbReference type="PANTHER" id="PTHR10885">
    <property type="entry name" value="ISOPENTENYL-DIPHOSPHATE DELTA-ISOMERASE"/>
    <property type="match status" value="1"/>
</dbReference>
<dbReference type="PANTHER" id="PTHR10885:SF0">
    <property type="entry name" value="ISOPENTENYL-DIPHOSPHATE DELTA-ISOMERASE"/>
    <property type="match status" value="1"/>
</dbReference>
<dbReference type="Pfam" id="PF00293">
    <property type="entry name" value="NUDIX"/>
    <property type="match status" value="1"/>
</dbReference>
<dbReference type="SUPFAM" id="SSF55811">
    <property type="entry name" value="Nudix"/>
    <property type="match status" value="1"/>
</dbReference>
<dbReference type="PROSITE" id="PS51462">
    <property type="entry name" value="NUDIX"/>
    <property type="match status" value="1"/>
</dbReference>
<sequence>MTLLLNTTAKLYIAPRTLPFTSSSTFARSPFLRIPSLLKPLSPLTARVSLSSTMGDSADAGMDAVQRRLMFDDECILVDENDRVVGHDTKYNCHLMEKIEKDNLLHRAFSVFLFNSKYELLLQQRSATKVTFPLVWTNTCCSHPLYRESELIDEESLGARNAAQRKLLDELGIPAEDVPVDQFTPLGRMLYKAPSDGKWGEHELDYLLFIVRDVSVNPNPDEVADIKYVNRDELKELLRKADAGEGGLKLSPWFRLVVDNFLFKWWDHVEKGTLKEVADMKTIHKLT</sequence>
<name>IDI_CANSA</name>
<protein>
    <recommendedName>
        <fullName evidence="5">Isopentenyl-diphosphate Delta-isomerase 1, chloroplastic</fullName>
        <shortName evidence="5">CsIDI</shortName>
        <ecNumber evidence="1">5.3.3.2</ecNumber>
    </recommendedName>
    <alternativeName>
        <fullName evidence="6">Isopentenyl pyrophosphate isomerase 1</fullName>
        <shortName evidence="6">IPP isomerase 1</shortName>
        <shortName evidence="6">IPPI1</shortName>
    </alternativeName>
</protein>